<dbReference type="EMBL" id="CY026296">
    <property type="status" value="NOT_ANNOTATED_CDS"/>
    <property type="molecule type" value="Viral_cRNA"/>
</dbReference>
<dbReference type="SMR" id="P0DJV3"/>
<dbReference type="Proteomes" id="UP000116872">
    <property type="component" value="Genome"/>
</dbReference>
<dbReference type="GO" id="GO:0003723">
    <property type="term" value="F:RNA binding"/>
    <property type="evidence" value="ECO:0007669"/>
    <property type="project" value="InterPro"/>
</dbReference>
<dbReference type="GO" id="GO:0039694">
    <property type="term" value="P:viral RNA genome replication"/>
    <property type="evidence" value="ECO:0007669"/>
    <property type="project" value="InterPro"/>
</dbReference>
<dbReference type="GO" id="GO:0075523">
    <property type="term" value="P:viral translational frameshifting"/>
    <property type="evidence" value="ECO:0007669"/>
    <property type="project" value="UniProtKB-KW"/>
</dbReference>
<dbReference type="FunFam" id="3.40.91.90:FF:000001">
    <property type="entry name" value="Polymerase acidic protein"/>
    <property type="match status" value="1"/>
</dbReference>
<dbReference type="Gene3D" id="3.40.91.90">
    <property type="entry name" value="Influenza RNA-dependent RNA polymerase subunit PA, endonuclease domain"/>
    <property type="match status" value="1"/>
</dbReference>
<dbReference type="InterPro" id="IPR001009">
    <property type="entry name" value="PA/PA-X"/>
</dbReference>
<dbReference type="InterPro" id="IPR038372">
    <property type="entry name" value="PA/PA-X_sf"/>
</dbReference>
<dbReference type="Pfam" id="PF00603">
    <property type="entry name" value="Flu_PA"/>
    <property type="match status" value="1"/>
</dbReference>
<keyword id="KW-1132">Decay of host mRNAs by virus</keyword>
<keyword id="KW-1262">Eukaryotic host gene expression shutoff by virus</keyword>
<keyword id="KW-1035">Host cytoplasm</keyword>
<keyword id="KW-1190">Host gene expression shutoff by virus</keyword>
<keyword id="KW-1192">Host mRNA suppression by virus</keyword>
<keyword id="KW-1048">Host nucleus</keyword>
<keyword id="KW-0945">Host-virus interaction</keyword>
<keyword id="KW-0688">Ribosomal frameshifting</keyword>
<reference key="1">
    <citation type="submission" date="2007-10" db="EMBL/GenBank/DDBJ databases">
        <title>The NIAID influenza genome sequencing project.</title>
        <authorList>
            <person name="Ghedin E."/>
            <person name="Spiro D."/>
            <person name="Miller N."/>
            <person name="Zaborsky J."/>
            <person name="Feldblyum T."/>
            <person name="Subbu V."/>
            <person name="Shumway M."/>
            <person name="Sparenborg J."/>
            <person name="Groveman L."/>
            <person name="Halpin R."/>
            <person name="Sitz J."/>
            <person name="Koo H."/>
            <person name="Salzberg S.L."/>
            <person name="Webster R.G."/>
            <person name="Hoffmann E."/>
            <person name="Krauss S."/>
            <person name="Naeve C."/>
            <person name="Bao Y."/>
            <person name="Bolotov P."/>
            <person name="Dernovoy D."/>
            <person name="Kiryutin B."/>
            <person name="Lipman D.J."/>
            <person name="Tatusova T."/>
        </authorList>
    </citation>
    <scope>NUCLEOTIDE SEQUENCE [GENOMIC RNA]</scope>
</reference>
<reference key="2">
    <citation type="submission" date="2007-10" db="EMBL/GenBank/DDBJ databases">
        <authorList>
            <consortium name="The NIAID Influenza Genome Sequencing Consortium"/>
        </authorList>
    </citation>
    <scope>NUCLEOTIDE SEQUENCE [GENOMIC RNA]</scope>
</reference>
<comment type="function">
    <text evidence="1 4">Plays a major role in the shutoff of the host protein expression by cleaving mRNAs probably via an endonuclease activity. This host shutoff allows the virus to escape from the host antiviral response (By similarity). Hijacks host RNA splicing machinery to selectively target host RNAs containing introns for destruction. This may explain the preferential degradation of RNAs that have undergone co- or post-transcriptional processing (By similarity).</text>
</comment>
<comment type="subcellular location">
    <subcellularLocation>
        <location evidence="4">Host cytoplasm</location>
    </subcellularLocation>
    <subcellularLocation>
        <location evidence="4">Host nucleus</location>
    </subcellularLocation>
</comment>
<comment type="alternative products">
    <event type="ribosomal frameshifting"/>
    <isoform>
        <id>P0DJV3-1</id>
        <name>PA-X</name>
        <sequence type="displayed"/>
    </isoform>
    <isoform>
        <id>A8C8X0-1</id>
        <name>PA</name>
        <sequence type="external"/>
    </isoform>
</comment>
<comment type="domain">
    <text evidence="1 4">The probable endonuclease active site in the N-terminus and the basic amino acid cluster in the C-terminus are important for the shutoff activity. The C-terminus acts as a nuclear localization signal (By similarity). The C-terminus is recruited to host protein complexes involved in nuclear Pol II RNA processing (By similarity).</text>
</comment>
<comment type="similarity">
    <text evidence="5">Belongs to the influenza viruses PA-X family.</text>
</comment>
<evidence type="ECO:0000250" key="1">
    <source>
        <dbReference type="UniProtKB" id="P0CK64"/>
    </source>
</evidence>
<evidence type="ECO:0000250" key="2">
    <source>
        <dbReference type="UniProtKB" id="P0CK68"/>
    </source>
</evidence>
<evidence type="ECO:0000250" key="3">
    <source>
        <dbReference type="UniProtKB" id="P0DJW8"/>
    </source>
</evidence>
<evidence type="ECO:0000250" key="4">
    <source>
        <dbReference type="UniProtKB" id="P0DXO5"/>
    </source>
</evidence>
<evidence type="ECO:0000305" key="5"/>
<accession>P0DJV3</accession>
<name>PAX_I67A2</name>
<organism>
    <name type="scientific">Influenza A virus (strain A/Swine/Wisconsin/1/1967 H1N1)</name>
    <dbReference type="NCBI Taxonomy" id="382855"/>
    <lineage>
        <taxon>Viruses</taxon>
        <taxon>Riboviria</taxon>
        <taxon>Orthornavirae</taxon>
        <taxon>Negarnaviricota</taxon>
        <taxon>Polyploviricotina</taxon>
        <taxon>Insthoviricetes</taxon>
        <taxon>Articulavirales</taxon>
        <taxon>Orthomyxoviridae</taxon>
        <taxon>Alphainfluenzavirus</taxon>
        <taxon>Alphainfluenzavirus influenzae</taxon>
        <taxon>Influenza A virus</taxon>
    </lineage>
</organism>
<organismHost>
    <name type="scientific">Aves</name>
    <dbReference type="NCBI Taxonomy" id="8782"/>
</organismHost>
<organismHost>
    <name type="scientific">Homo sapiens</name>
    <name type="common">Human</name>
    <dbReference type="NCBI Taxonomy" id="9606"/>
</organismHost>
<organismHost>
    <name type="scientific">Sus scrofa</name>
    <name type="common">Pig</name>
    <dbReference type="NCBI Taxonomy" id="9823"/>
</organismHost>
<gene>
    <name type="primary">PA</name>
</gene>
<proteinExistence type="inferred from homology"/>
<feature type="chain" id="PRO_0000419416" description="Protein PA-X">
    <location>
        <begin position="1"/>
        <end position="252"/>
    </location>
</feature>
<feature type="active site" evidence="2">
    <location>
        <position position="80"/>
    </location>
</feature>
<feature type="active site" evidence="2">
    <location>
        <position position="108"/>
    </location>
</feature>
<feature type="site" description="Important for efficient shutoff activity and nuclear localization" evidence="4">
    <location>
        <position position="195"/>
    </location>
</feature>
<feature type="site" description="Important for efficient shutoff activity and nuclear localization" evidence="4">
    <location>
        <position position="198"/>
    </location>
</feature>
<feature type="site" description="Important for efficient shutoff activity and nuclear localization" evidence="4">
    <location>
        <position position="199"/>
    </location>
</feature>
<feature type="site" description="Important for efficient shutoff activity" evidence="3">
    <location>
        <position position="202"/>
    </location>
</feature>
<feature type="site" description="Important for efficient shutoff activity" evidence="3">
    <location>
        <position position="203"/>
    </location>
</feature>
<sequence length="252" mass="29453">MEDFVRQCFNPMIVELAEKTMKEYGENPKIETNKFAAICTHMEVCFMYSDFHFINERGESIIVEPGDSNALLKHRFEIIEGRDRNMAWTVVNSICNTTGVGKPRFLPDLYDYKEDRFIEIGVTRREIHIYYLEKANKIKSEETHIHIFSFTGEEMATKADYTLDEESRARIKTRLFTIRQEMASRGLWDSFVSPREARRQLKKDLRSQGQCEGLPTKVSHQTSPVLITLEPMWMDSSRMATLRASFPKCLEK</sequence>
<protein>
    <recommendedName>
        <fullName>Protein PA-X</fullName>
    </recommendedName>
</protein>